<gene>
    <name type="ordered locus">At3g49470</name>
    <name type="ORF">T9C5.70</name>
</gene>
<dbReference type="EMBL" id="AC012329">
    <property type="protein sequence ID" value="AAG52192.1"/>
    <property type="molecule type" value="Genomic_DNA"/>
</dbReference>
<dbReference type="EMBL" id="AL132964">
    <property type="protein sequence ID" value="CAB62452.1"/>
    <property type="molecule type" value="Genomic_DNA"/>
</dbReference>
<dbReference type="EMBL" id="CP002686">
    <property type="protein sequence ID" value="AEE78547.1"/>
    <property type="molecule type" value="Genomic_DNA"/>
</dbReference>
<dbReference type="EMBL" id="AF370545">
    <property type="protein sequence ID" value="AAK48972.1"/>
    <property type="molecule type" value="mRNA"/>
</dbReference>
<dbReference type="EMBL" id="AY072536">
    <property type="protein sequence ID" value="AAL66951.1"/>
    <property type="molecule type" value="mRNA"/>
</dbReference>
<dbReference type="PIR" id="T46225">
    <property type="entry name" value="T46225"/>
</dbReference>
<dbReference type="SMR" id="Q94JX9"/>
<dbReference type="BioGRID" id="9427">
    <property type="interactions" value="8"/>
</dbReference>
<dbReference type="FunCoup" id="Q94JX9">
    <property type="interactions" value="3624"/>
</dbReference>
<dbReference type="IntAct" id="Q94JX9">
    <property type="interactions" value="5"/>
</dbReference>
<dbReference type="STRING" id="3702.Q94JX9"/>
<dbReference type="iPTMnet" id="Q94JX9"/>
<dbReference type="PaxDb" id="3702-AT3G49470.1"/>
<dbReference type="ProteomicsDB" id="248923"/>
<dbReference type="EnsemblPlants" id="AT3G49470.1">
    <property type="protein sequence ID" value="AT3G49470.1"/>
    <property type="gene ID" value="AT3G49470"/>
</dbReference>
<dbReference type="Gramene" id="AT3G49470.1">
    <property type="protein sequence ID" value="AT3G49470.1"/>
    <property type="gene ID" value="AT3G49470"/>
</dbReference>
<dbReference type="KEGG" id="ath:AT3G49470"/>
<dbReference type="Araport" id="AT3G49470"/>
<dbReference type="TAIR" id="AT3G49470">
    <property type="gene designation" value="NACA2"/>
</dbReference>
<dbReference type="eggNOG" id="KOG2239">
    <property type="taxonomic scope" value="Eukaryota"/>
</dbReference>
<dbReference type="HOGENOM" id="CLU_057806_3_0_1"/>
<dbReference type="InParanoid" id="Q94JX9"/>
<dbReference type="OMA" id="TQHAQMS"/>
<dbReference type="OrthoDB" id="3169036at2759"/>
<dbReference type="PhylomeDB" id="Q94JX9"/>
<dbReference type="CD-CODE" id="4299E36E">
    <property type="entry name" value="Nucleolus"/>
</dbReference>
<dbReference type="PRO" id="PR:Q94JX9"/>
<dbReference type="Proteomes" id="UP000006548">
    <property type="component" value="Chromosome 3"/>
</dbReference>
<dbReference type="ExpressionAtlas" id="Q94JX9">
    <property type="expression patterns" value="baseline and differential"/>
</dbReference>
<dbReference type="GO" id="GO:0005829">
    <property type="term" value="C:cytosol"/>
    <property type="evidence" value="ECO:0007005"/>
    <property type="project" value="TAIR"/>
</dbReference>
<dbReference type="GO" id="GO:0005854">
    <property type="term" value="C:nascent polypeptide-associated complex"/>
    <property type="evidence" value="ECO:0007669"/>
    <property type="project" value="InterPro"/>
</dbReference>
<dbReference type="GO" id="GO:0003729">
    <property type="term" value="F:mRNA binding"/>
    <property type="evidence" value="ECO:0000314"/>
    <property type="project" value="TAIR"/>
</dbReference>
<dbReference type="GO" id="GO:0015031">
    <property type="term" value="P:protein transport"/>
    <property type="evidence" value="ECO:0007669"/>
    <property type="project" value="UniProtKB-KW"/>
</dbReference>
<dbReference type="CDD" id="cd22054">
    <property type="entry name" value="NAC_NACA"/>
    <property type="match status" value="1"/>
</dbReference>
<dbReference type="CDD" id="cd14358">
    <property type="entry name" value="UBA_NAC_euk"/>
    <property type="match status" value="1"/>
</dbReference>
<dbReference type="FunFam" id="2.20.70.30:FF:000002">
    <property type="entry name" value="Nascent polypeptide-associated complex (NAC), alpha subunit"/>
    <property type="match status" value="1"/>
</dbReference>
<dbReference type="FunFam" id="1.10.8.10:FF:000006">
    <property type="entry name" value="Putative nascent polypeptide-associated complex subunit alpha"/>
    <property type="match status" value="1"/>
</dbReference>
<dbReference type="Gene3D" id="1.10.8.10">
    <property type="entry name" value="DNA helicase RuvA subunit, C-terminal domain"/>
    <property type="match status" value="1"/>
</dbReference>
<dbReference type="Gene3D" id="2.20.70.30">
    <property type="entry name" value="Nascent polypeptide-associated complex domain"/>
    <property type="match status" value="1"/>
</dbReference>
<dbReference type="InterPro" id="IPR016641">
    <property type="entry name" value="EGD2/NACA0like"/>
</dbReference>
<dbReference type="InterPro" id="IPR044034">
    <property type="entry name" value="NAC-like_UBA"/>
</dbReference>
<dbReference type="InterPro" id="IPR038187">
    <property type="entry name" value="NAC_A/B_dom_sf"/>
</dbReference>
<dbReference type="InterPro" id="IPR002715">
    <property type="entry name" value="Nas_poly-pep-assoc_cplx_dom"/>
</dbReference>
<dbReference type="PANTHER" id="PTHR21713">
    <property type="entry name" value="NASCENT POLYPEPTIDE ASSOCIATED COMPLEX ALPHA SUBUNIT-RELATED"/>
    <property type="match status" value="1"/>
</dbReference>
<dbReference type="Pfam" id="PF01849">
    <property type="entry name" value="NAC"/>
    <property type="match status" value="1"/>
</dbReference>
<dbReference type="Pfam" id="PF19026">
    <property type="entry name" value="UBA_HYPK"/>
    <property type="match status" value="1"/>
</dbReference>
<dbReference type="SMART" id="SM01407">
    <property type="entry name" value="NAC"/>
    <property type="match status" value="1"/>
</dbReference>
<dbReference type="PROSITE" id="PS51151">
    <property type="entry name" value="NAC_AB"/>
    <property type="match status" value="1"/>
</dbReference>
<protein>
    <recommendedName>
        <fullName>Nascent polypeptide-associated complex subunit alpha-like protein 2</fullName>
        <shortName>NAC-alpha-like protein 2</shortName>
    </recommendedName>
    <alternativeName>
        <fullName>Alpha-NAC-like protein 2</fullName>
    </alternativeName>
</protein>
<name>NACA2_ARATH</name>
<comment type="function">
    <text evidence="1">May promote appropriate targeting of ribosome-nascent polypeptide complexes.</text>
</comment>
<comment type="similarity">
    <text evidence="4">Belongs to the NAC-alpha family.</text>
</comment>
<reference key="1">
    <citation type="journal article" date="2000" name="Nature">
        <title>Sequence and analysis of chromosome 3 of the plant Arabidopsis thaliana.</title>
        <authorList>
            <person name="Salanoubat M."/>
            <person name="Lemcke K."/>
            <person name="Rieger M."/>
            <person name="Ansorge W."/>
            <person name="Unseld M."/>
            <person name="Fartmann B."/>
            <person name="Valle G."/>
            <person name="Bloecker H."/>
            <person name="Perez-Alonso M."/>
            <person name="Obermaier B."/>
            <person name="Delseny M."/>
            <person name="Boutry M."/>
            <person name="Grivell L.A."/>
            <person name="Mache R."/>
            <person name="Puigdomenech P."/>
            <person name="De Simone V."/>
            <person name="Choisne N."/>
            <person name="Artiguenave F."/>
            <person name="Robert C."/>
            <person name="Brottier P."/>
            <person name="Wincker P."/>
            <person name="Cattolico L."/>
            <person name="Weissenbach J."/>
            <person name="Saurin W."/>
            <person name="Quetier F."/>
            <person name="Schaefer M."/>
            <person name="Mueller-Auer S."/>
            <person name="Gabel C."/>
            <person name="Fuchs M."/>
            <person name="Benes V."/>
            <person name="Wurmbach E."/>
            <person name="Drzonek H."/>
            <person name="Erfle H."/>
            <person name="Jordan N."/>
            <person name="Bangert S."/>
            <person name="Wiedelmann R."/>
            <person name="Kranz H."/>
            <person name="Voss H."/>
            <person name="Holland R."/>
            <person name="Brandt P."/>
            <person name="Nyakatura G."/>
            <person name="Vezzi A."/>
            <person name="D'Angelo M."/>
            <person name="Pallavicini A."/>
            <person name="Toppo S."/>
            <person name="Simionati B."/>
            <person name="Conrad A."/>
            <person name="Hornischer K."/>
            <person name="Kauer G."/>
            <person name="Loehnert T.-H."/>
            <person name="Nordsiek G."/>
            <person name="Reichelt J."/>
            <person name="Scharfe M."/>
            <person name="Schoen O."/>
            <person name="Bargues M."/>
            <person name="Terol J."/>
            <person name="Climent J."/>
            <person name="Navarro P."/>
            <person name="Collado C."/>
            <person name="Perez-Perez A."/>
            <person name="Ottenwaelder B."/>
            <person name="Duchemin D."/>
            <person name="Cooke R."/>
            <person name="Laudie M."/>
            <person name="Berger-Llauro C."/>
            <person name="Purnelle B."/>
            <person name="Masuy D."/>
            <person name="de Haan M."/>
            <person name="Maarse A.C."/>
            <person name="Alcaraz J.-P."/>
            <person name="Cottet A."/>
            <person name="Casacuberta E."/>
            <person name="Monfort A."/>
            <person name="Argiriou A."/>
            <person name="Flores M."/>
            <person name="Liguori R."/>
            <person name="Vitale D."/>
            <person name="Mannhaupt G."/>
            <person name="Haase D."/>
            <person name="Schoof H."/>
            <person name="Rudd S."/>
            <person name="Zaccaria P."/>
            <person name="Mewes H.-W."/>
            <person name="Mayer K.F.X."/>
            <person name="Kaul S."/>
            <person name="Town C.D."/>
            <person name="Koo H.L."/>
            <person name="Tallon L.J."/>
            <person name="Jenkins J."/>
            <person name="Rooney T."/>
            <person name="Rizzo M."/>
            <person name="Walts A."/>
            <person name="Utterback T."/>
            <person name="Fujii C.Y."/>
            <person name="Shea T.P."/>
            <person name="Creasy T.H."/>
            <person name="Haas B."/>
            <person name="Maiti R."/>
            <person name="Wu D."/>
            <person name="Peterson J."/>
            <person name="Van Aken S."/>
            <person name="Pai G."/>
            <person name="Militscher J."/>
            <person name="Sellers P."/>
            <person name="Gill J.E."/>
            <person name="Feldblyum T.V."/>
            <person name="Preuss D."/>
            <person name="Lin X."/>
            <person name="Nierman W.C."/>
            <person name="Salzberg S.L."/>
            <person name="White O."/>
            <person name="Venter J.C."/>
            <person name="Fraser C.M."/>
            <person name="Kaneko T."/>
            <person name="Nakamura Y."/>
            <person name="Sato S."/>
            <person name="Kato T."/>
            <person name="Asamizu E."/>
            <person name="Sasamoto S."/>
            <person name="Kimura T."/>
            <person name="Idesawa K."/>
            <person name="Kawashima K."/>
            <person name="Kishida Y."/>
            <person name="Kiyokawa C."/>
            <person name="Kohara M."/>
            <person name="Matsumoto M."/>
            <person name="Matsuno A."/>
            <person name="Muraki A."/>
            <person name="Nakayama S."/>
            <person name="Nakazaki N."/>
            <person name="Shinpo S."/>
            <person name="Takeuchi C."/>
            <person name="Wada T."/>
            <person name="Watanabe A."/>
            <person name="Yamada M."/>
            <person name="Yasuda M."/>
            <person name="Tabata S."/>
        </authorList>
    </citation>
    <scope>NUCLEOTIDE SEQUENCE [LARGE SCALE GENOMIC DNA]</scope>
    <source>
        <strain>cv. Columbia</strain>
    </source>
</reference>
<reference key="2">
    <citation type="journal article" date="2017" name="Plant J.">
        <title>Araport11: a complete reannotation of the Arabidopsis thaliana reference genome.</title>
        <authorList>
            <person name="Cheng C.Y."/>
            <person name="Krishnakumar V."/>
            <person name="Chan A.P."/>
            <person name="Thibaud-Nissen F."/>
            <person name="Schobel S."/>
            <person name="Town C.D."/>
        </authorList>
    </citation>
    <scope>GENOME REANNOTATION</scope>
    <source>
        <strain>cv. Columbia</strain>
    </source>
</reference>
<reference key="3">
    <citation type="journal article" date="2003" name="Science">
        <title>Empirical analysis of transcriptional activity in the Arabidopsis genome.</title>
        <authorList>
            <person name="Yamada K."/>
            <person name="Lim J."/>
            <person name="Dale J.M."/>
            <person name="Chen H."/>
            <person name="Shinn P."/>
            <person name="Palm C.J."/>
            <person name="Southwick A.M."/>
            <person name="Wu H.C."/>
            <person name="Kim C.J."/>
            <person name="Nguyen M."/>
            <person name="Pham P.K."/>
            <person name="Cheuk R.F."/>
            <person name="Karlin-Newmann G."/>
            <person name="Liu S.X."/>
            <person name="Lam B."/>
            <person name="Sakano H."/>
            <person name="Wu T."/>
            <person name="Yu G."/>
            <person name="Miranda M."/>
            <person name="Quach H.L."/>
            <person name="Tripp M."/>
            <person name="Chang C.H."/>
            <person name="Lee J.M."/>
            <person name="Toriumi M.J."/>
            <person name="Chan M.M."/>
            <person name="Tang C.C."/>
            <person name="Onodera C.S."/>
            <person name="Deng J.M."/>
            <person name="Akiyama K."/>
            <person name="Ansari Y."/>
            <person name="Arakawa T."/>
            <person name="Banh J."/>
            <person name="Banno F."/>
            <person name="Bowser L."/>
            <person name="Brooks S.Y."/>
            <person name="Carninci P."/>
            <person name="Chao Q."/>
            <person name="Choy N."/>
            <person name="Enju A."/>
            <person name="Goldsmith A.D."/>
            <person name="Gurjal M."/>
            <person name="Hansen N.F."/>
            <person name="Hayashizaki Y."/>
            <person name="Johnson-Hopson C."/>
            <person name="Hsuan V.W."/>
            <person name="Iida K."/>
            <person name="Karnes M."/>
            <person name="Khan S."/>
            <person name="Koesema E."/>
            <person name="Ishida J."/>
            <person name="Jiang P.X."/>
            <person name="Jones T."/>
            <person name="Kawai J."/>
            <person name="Kamiya A."/>
            <person name="Meyers C."/>
            <person name="Nakajima M."/>
            <person name="Narusaka M."/>
            <person name="Seki M."/>
            <person name="Sakurai T."/>
            <person name="Satou M."/>
            <person name="Tamse R."/>
            <person name="Vaysberg M."/>
            <person name="Wallender E.K."/>
            <person name="Wong C."/>
            <person name="Yamamura Y."/>
            <person name="Yuan S."/>
            <person name="Shinozaki K."/>
            <person name="Davis R.W."/>
            <person name="Theologis A."/>
            <person name="Ecker J.R."/>
        </authorList>
    </citation>
    <scope>NUCLEOTIDE SEQUENCE [LARGE SCALE MRNA]</scope>
    <source>
        <strain>cv. Columbia</strain>
    </source>
</reference>
<keyword id="KW-0653">Protein transport</keyword>
<keyword id="KW-1185">Reference proteome</keyword>
<keyword id="KW-0813">Transport</keyword>
<accession>Q94JX9</accession>
<accession>Q9S7G0</accession>
<organism>
    <name type="scientific">Arabidopsis thaliana</name>
    <name type="common">Mouse-ear cress</name>
    <dbReference type="NCBI Taxonomy" id="3702"/>
    <lineage>
        <taxon>Eukaryota</taxon>
        <taxon>Viridiplantae</taxon>
        <taxon>Streptophyta</taxon>
        <taxon>Embryophyta</taxon>
        <taxon>Tracheophyta</taxon>
        <taxon>Spermatophyta</taxon>
        <taxon>Magnoliopsida</taxon>
        <taxon>eudicotyledons</taxon>
        <taxon>Gunneridae</taxon>
        <taxon>Pentapetalae</taxon>
        <taxon>rosids</taxon>
        <taxon>malvids</taxon>
        <taxon>Brassicales</taxon>
        <taxon>Brassicaceae</taxon>
        <taxon>Camelineae</taxon>
        <taxon>Arabidopsis</taxon>
    </lineage>
</organism>
<evidence type="ECO:0000250" key="1"/>
<evidence type="ECO:0000255" key="2">
    <source>
        <dbReference type="PROSITE-ProRule" id="PRU00507"/>
    </source>
</evidence>
<evidence type="ECO:0000256" key="3">
    <source>
        <dbReference type="SAM" id="MobiDB-lite"/>
    </source>
</evidence>
<evidence type="ECO:0000305" key="4"/>
<feature type="chain" id="PRO_0000135588" description="Nascent polypeptide-associated complex subunit alpha-like protein 2">
    <location>
        <begin position="1"/>
        <end position="217"/>
    </location>
</feature>
<feature type="domain" description="NAC-A/B" evidence="2">
    <location>
        <begin position="70"/>
        <end position="135"/>
    </location>
</feature>
<feature type="domain" description="UBA">
    <location>
        <begin position="178"/>
        <end position="215"/>
    </location>
</feature>
<feature type="region of interest" description="Disordered" evidence="3">
    <location>
        <begin position="1"/>
        <end position="81"/>
    </location>
</feature>
<feature type="compositionally biased region" description="Acidic residues" evidence="3">
    <location>
        <begin position="37"/>
        <end position="60"/>
    </location>
</feature>
<feature type="sequence conflict" description="In Ref. 3; AAK48972/AAL66951." evidence="4" ref="3">
    <original>R</original>
    <variation>K</variation>
    <location>
        <position position="144"/>
    </location>
</feature>
<sequence>MSPPPAVVTESADGQPEQPPVTAIAEELEKKLQTDEPIVEDVKDDEDDDDDDEEEEDDDAQGVSGSSKQSRSEKKSRKAMLKLGMKPVTGVSRVTIKRTKNVLFFISKPDVFKSPHSETYVIFGEAKIEDLSSQLQTQAAQQFRMPEIGATSQRAEASTATVEAQVEEDEEEIDETGVEARDIDLVMTQAGVSRSKAVKALKSHDGDIVSAIMELTT</sequence>
<proteinExistence type="evidence at transcript level"/>